<gene>
    <name evidence="1" type="primary">thiK</name>
    <name type="ordered locus">SBO_1955</name>
</gene>
<evidence type="ECO:0000255" key="1">
    <source>
        <dbReference type="HAMAP-Rule" id="MF_01604"/>
    </source>
</evidence>
<dbReference type="EC" id="2.7.1.89" evidence="1"/>
<dbReference type="EMBL" id="CP000036">
    <property type="protein sequence ID" value="ABB66545.1"/>
    <property type="molecule type" value="Genomic_DNA"/>
</dbReference>
<dbReference type="RefSeq" id="WP_001116581.1">
    <property type="nucleotide sequence ID" value="NC_007613.1"/>
</dbReference>
<dbReference type="SMR" id="Q31ZG3"/>
<dbReference type="KEGG" id="sbo:SBO_1955"/>
<dbReference type="HOGENOM" id="CLU_055115_2_1_6"/>
<dbReference type="UniPathway" id="UPA00060">
    <property type="reaction ID" value="UER00596"/>
</dbReference>
<dbReference type="Proteomes" id="UP000007067">
    <property type="component" value="Chromosome"/>
</dbReference>
<dbReference type="GO" id="GO:0005524">
    <property type="term" value="F:ATP binding"/>
    <property type="evidence" value="ECO:0007669"/>
    <property type="project" value="UniProtKB-KW"/>
</dbReference>
<dbReference type="GO" id="GO:0019165">
    <property type="term" value="F:thiamine kinase activity"/>
    <property type="evidence" value="ECO:0007669"/>
    <property type="project" value="UniProtKB-UniRule"/>
</dbReference>
<dbReference type="GO" id="GO:0009229">
    <property type="term" value="P:thiamine diphosphate biosynthetic process"/>
    <property type="evidence" value="ECO:0007669"/>
    <property type="project" value="UniProtKB-UniRule"/>
</dbReference>
<dbReference type="GO" id="GO:0006772">
    <property type="term" value="P:thiamine metabolic process"/>
    <property type="evidence" value="ECO:0007669"/>
    <property type="project" value="InterPro"/>
</dbReference>
<dbReference type="FunFam" id="3.90.1200.10:FF:000004">
    <property type="entry name" value="Thiamine kinase"/>
    <property type="match status" value="1"/>
</dbReference>
<dbReference type="Gene3D" id="3.90.1200.10">
    <property type="match status" value="1"/>
</dbReference>
<dbReference type="HAMAP" id="MF_01604">
    <property type="entry name" value="Thiamine_kinase"/>
    <property type="match status" value="1"/>
</dbReference>
<dbReference type="InterPro" id="IPR002575">
    <property type="entry name" value="Aminoglycoside_PTrfase"/>
</dbReference>
<dbReference type="InterPro" id="IPR011009">
    <property type="entry name" value="Kinase-like_dom_sf"/>
</dbReference>
<dbReference type="InterPro" id="IPR014093">
    <property type="entry name" value="Thiamine_kinase"/>
</dbReference>
<dbReference type="NCBIfam" id="NF007620">
    <property type="entry name" value="PRK10271.1"/>
    <property type="match status" value="1"/>
</dbReference>
<dbReference type="NCBIfam" id="TIGR02721">
    <property type="entry name" value="ycfN_thiK"/>
    <property type="match status" value="1"/>
</dbReference>
<dbReference type="Pfam" id="PF01636">
    <property type="entry name" value="APH"/>
    <property type="match status" value="1"/>
</dbReference>
<dbReference type="SUPFAM" id="SSF56112">
    <property type="entry name" value="Protein kinase-like (PK-like)"/>
    <property type="match status" value="1"/>
</dbReference>
<protein>
    <recommendedName>
        <fullName evidence="1">Thiamine kinase</fullName>
        <ecNumber evidence="1">2.7.1.89</ecNumber>
    </recommendedName>
</protein>
<feature type="chain" id="PRO_0000290999" description="Thiamine kinase">
    <location>
        <begin position="1"/>
        <end position="274"/>
    </location>
</feature>
<sequence>MPFRSNNPITRDELLSRFFPQFHPVTTFNSGLSGGSFLIEHQGQRFVVRQPHDPDAPQSAFLRQYRALSQLPASIAPKPHLYLRDWMVVDYLPGAVKTYLPDTNELAGLLYYLHQQPRFGWRITLLPLLELYWQQSDPARRTVGWLRMLKRLRKAREPRPLRLSPLHMDVHAGNLVHSASGLKLIDWEYAGDGDTALELAAVWVENTEQHRQLVNDYATRAKIYPAQLWRQVRRWFPWLLMLKAGWFEYRWRQTGDQQFIRLADDTWRQLLIKQ</sequence>
<accession>Q31ZG3</accession>
<reference key="1">
    <citation type="journal article" date="2005" name="Nucleic Acids Res.">
        <title>Genome dynamics and diversity of Shigella species, the etiologic agents of bacillary dysentery.</title>
        <authorList>
            <person name="Yang F."/>
            <person name="Yang J."/>
            <person name="Zhang X."/>
            <person name="Chen L."/>
            <person name="Jiang Y."/>
            <person name="Yan Y."/>
            <person name="Tang X."/>
            <person name="Wang J."/>
            <person name="Xiong Z."/>
            <person name="Dong J."/>
            <person name="Xue Y."/>
            <person name="Zhu Y."/>
            <person name="Xu X."/>
            <person name="Sun L."/>
            <person name="Chen S."/>
            <person name="Nie H."/>
            <person name="Peng J."/>
            <person name="Xu J."/>
            <person name="Wang Y."/>
            <person name="Yuan Z."/>
            <person name="Wen Y."/>
            <person name="Yao Z."/>
            <person name="Shen Y."/>
            <person name="Qiang B."/>
            <person name="Hou Y."/>
            <person name="Yu J."/>
            <person name="Jin Q."/>
        </authorList>
    </citation>
    <scope>NUCLEOTIDE SEQUENCE [LARGE SCALE GENOMIC DNA]</scope>
    <source>
        <strain>Sb227</strain>
    </source>
</reference>
<name>THIK_SHIBS</name>
<proteinExistence type="inferred from homology"/>
<keyword id="KW-0067">ATP-binding</keyword>
<keyword id="KW-0418">Kinase</keyword>
<keyword id="KW-0547">Nucleotide-binding</keyword>
<keyword id="KW-0808">Transferase</keyword>
<organism>
    <name type="scientific">Shigella boydii serotype 4 (strain Sb227)</name>
    <dbReference type="NCBI Taxonomy" id="300268"/>
    <lineage>
        <taxon>Bacteria</taxon>
        <taxon>Pseudomonadati</taxon>
        <taxon>Pseudomonadota</taxon>
        <taxon>Gammaproteobacteria</taxon>
        <taxon>Enterobacterales</taxon>
        <taxon>Enterobacteriaceae</taxon>
        <taxon>Shigella</taxon>
    </lineage>
</organism>
<comment type="function">
    <text evidence="1">Catalyzes the ATP-dependent phosphorylation of thiamine to thiamine phosphate. Is involved in thiamine salvage.</text>
</comment>
<comment type="catalytic activity">
    <reaction evidence="1">
        <text>thiamine + ATP = thiamine phosphate + ADP + H(+)</text>
        <dbReference type="Rhea" id="RHEA:12012"/>
        <dbReference type="ChEBI" id="CHEBI:15378"/>
        <dbReference type="ChEBI" id="CHEBI:18385"/>
        <dbReference type="ChEBI" id="CHEBI:30616"/>
        <dbReference type="ChEBI" id="CHEBI:37575"/>
        <dbReference type="ChEBI" id="CHEBI:456216"/>
        <dbReference type="EC" id="2.7.1.89"/>
    </reaction>
    <physiologicalReaction direction="left-to-right" evidence="1">
        <dbReference type="Rhea" id="RHEA:12013"/>
    </physiologicalReaction>
</comment>
<comment type="pathway">
    <text evidence="1">Cofactor biosynthesis; thiamine diphosphate biosynthesis; thiamine phosphate from thiamine: step 1/1.</text>
</comment>
<comment type="similarity">
    <text evidence="1">Belongs to the thiamine kinase family.</text>
</comment>